<proteinExistence type="evidence at protein level"/>
<evidence type="ECO:0000250" key="1">
    <source>
        <dbReference type="UniProtKB" id="P09960"/>
    </source>
</evidence>
<evidence type="ECO:0000269" key="2">
    <source>
    </source>
</evidence>
<evidence type="ECO:0000269" key="3">
    <source>
    </source>
</evidence>
<evidence type="ECO:0000269" key="4">
    <source>
    </source>
</evidence>
<evidence type="ECO:0000269" key="5">
    <source>
    </source>
</evidence>
<evidence type="ECO:0000305" key="6"/>
<name>LKHA4_MOUSE</name>
<protein>
    <recommendedName>
        <fullName>Leukotriene A-4 hydrolase</fullName>
        <shortName>LTA-4 hydrolase</shortName>
        <ecNumber evidence="3 5">3.3.2.6</ecNumber>
    </recommendedName>
    <alternativeName>
        <fullName>Leukotriene A(4) hydrolase</fullName>
    </alternativeName>
    <alternativeName>
        <fullName>Tripeptide aminopeptidase LTA4H</fullName>
        <ecNumber evidence="3 4">3.4.11.4</ecNumber>
    </alternativeName>
</protein>
<sequence>MPEVADTCSLASPASVCRTQHLHLRCSVDFARRTLTGTAALTVQSQEENLRSLTLDTKDLTIEKVVINGQEVKYTLGESQGYKGSPMEISLPIALSKNQEIVIEISFETSPKSSALQWLTPEQTSGKQHPYLFSQCQAIHCRAILPCQDTPSVKLTYTAEVSVPKELVALMSAIRDGEAPDPEDPSRKIYRFNQRVPIPCYLIALVVGALESRQIGPRTLVWSEKEQVEKSANEFSETESMLKIAEDLGGPYVWGQYDLLVLPPSFPYGGMENPCLTFVTPTLLAGDKSLSNVIAHEISHSWTGNLVTNKTWDHFWLNEGHTVYLERHICGRLFGEKFRHFHALGGWGELQNTIKTFGESHPFTKLVVDLKDVDPDVAYSSIPYEKGFALLFYLEQLLGGPEVFLGFLKAYVKKFSYQSVTTDDWKSFLYSHFKDKVDLLNQVDWNTWLYAPGLPPVKPNYDVTLTNACIALSQRWVTAKEEDLSSFSIADLKDLSSHQLNEFLAQVLQKAPLPLGHIKRMQEVYNFNAINNSEIRFRWLRLCIQSKWEEAIPLALKMATEQGRMKFTRPLFKDLAAFDKSHDQAVHTYQEHKASMHPVTAMLVGRDLKVD</sequence>
<gene>
    <name type="primary">Lta4h</name>
</gene>
<dbReference type="EC" id="3.3.2.6" evidence="3 5"/>
<dbReference type="EC" id="3.4.11.4" evidence="3 4"/>
<dbReference type="EMBL" id="M63848">
    <property type="protein sequence ID" value="AAB59675.1"/>
    <property type="molecule type" value="mRNA"/>
</dbReference>
<dbReference type="EMBL" id="AK134931">
    <property type="protein sequence ID" value="BAE22342.1"/>
    <property type="molecule type" value="mRNA"/>
</dbReference>
<dbReference type="EMBL" id="BC021417">
    <property type="protein sequence ID" value="AAH21417.1"/>
    <property type="molecule type" value="mRNA"/>
</dbReference>
<dbReference type="CCDS" id="CCDS24125.1"/>
<dbReference type="PIR" id="JN0066">
    <property type="entry name" value="JN0066"/>
</dbReference>
<dbReference type="RefSeq" id="NP_001300826.1">
    <property type="nucleotide sequence ID" value="NM_001313897.1"/>
</dbReference>
<dbReference type="RefSeq" id="NP_032543.2">
    <property type="nucleotide sequence ID" value="NM_008517.2"/>
</dbReference>
<dbReference type="SMR" id="P24527"/>
<dbReference type="BioGRID" id="201217">
    <property type="interactions" value="14"/>
</dbReference>
<dbReference type="FunCoup" id="P24527">
    <property type="interactions" value="3483"/>
</dbReference>
<dbReference type="IntAct" id="P24527">
    <property type="interactions" value="1"/>
</dbReference>
<dbReference type="STRING" id="10090.ENSMUSP00000016033"/>
<dbReference type="BindingDB" id="P24527"/>
<dbReference type="ChEMBL" id="CHEMBL3738"/>
<dbReference type="DrugCentral" id="P24527"/>
<dbReference type="MEROPS" id="M01.004"/>
<dbReference type="GlyGen" id="P24527">
    <property type="glycosylation" value="1 site, 1 O-linked glycan (1 site)"/>
</dbReference>
<dbReference type="iPTMnet" id="P24527"/>
<dbReference type="PhosphoSitePlus" id="P24527"/>
<dbReference type="SwissPalm" id="P24527"/>
<dbReference type="jPOST" id="P24527"/>
<dbReference type="PaxDb" id="10090-ENSMUSP00000016033"/>
<dbReference type="PeptideAtlas" id="P24527"/>
<dbReference type="ProteomicsDB" id="292101"/>
<dbReference type="Pumba" id="P24527"/>
<dbReference type="Antibodypedia" id="4453">
    <property type="antibodies" value="555 antibodies from 38 providers"/>
</dbReference>
<dbReference type="DNASU" id="16993"/>
<dbReference type="Ensembl" id="ENSMUST00000016033.9">
    <property type="protein sequence ID" value="ENSMUSP00000016033.8"/>
    <property type="gene ID" value="ENSMUSG00000015889.9"/>
</dbReference>
<dbReference type="GeneID" id="16993"/>
<dbReference type="KEGG" id="mmu:16993"/>
<dbReference type="UCSC" id="uc007gur.1">
    <property type="organism name" value="mouse"/>
</dbReference>
<dbReference type="AGR" id="MGI:96836"/>
<dbReference type="CTD" id="4048"/>
<dbReference type="MGI" id="MGI:96836">
    <property type="gene designation" value="Lta4h"/>
</dbReference>
<dbReference type="VEuPathDB" id="HostDB:ENSMUSG00000015889"/>
<dbReference type="eggNOG" id="KOG1047">
    <property type="taxonomic scope" value="Eukaryota"/>
</dbReference>
<dbReference type="GeneTree" id="ENSGT00940000156375"/>
<dbReference type="HOGENOM" id="CLU_014505_0_0_1"/>
<dbReference type="InParanoid" id="P24527"/>
<dbReference type="OMA" id="CTALQWM"/>
<dbReference type="OrthoDB" id="79562at2759"/>
<dbReference type="PhylomeDB" id="P24527"/>
<dbReference type="TreeFam" id="TF300758"/>
<dbReference type="BRENDA" id="3.3.2.6">
    <property type="organism ID" value="3474"/>
</dbReference>
<dbReference type="Reactome" id="R-MMU-2142691">
    <property type="pathway name" value="Synthesis of Leukotrienes (LT) and Eoxins (EX)"/>
</dbReference>
<dbReference type="Reactome" id="R-MMU-6798695">
    <property type="pathway name" value="Neutrophil degranulation"/>
</dbReference>
<dbReference type="Reactome" id="R-MMU-9018676">
    <property type="pathway name" value="Biosynthesis of D-series resolvins"/>
</dbReference>
<dbReference type="Reactome" id="R-MMU-9018681">
    <property type="pathway name" value="Biosynthesis of protectins"/>
</dbReference>
<dbReference type="Reactome" id="R-MMU-9018896">
    <property type="pathway name" value="Biosynthesis of E-series 18(S)-resolvins"/>
</dbReference>
<dbReference type="Reactome" id="R-MMU-9020265">
    <property type="pathway name" value="Biosynthesis of aspirin-triggered D-series resolvins"/>
</dbReference>
<dbReference type="Reactome" id="R-MMU-9023661">
    <property type="pathway name" value="Biosynthesis of E-series 18(R)-resolvins"/>
</dbReference>
<dbReference type="SABIO-RK" id="P24527"/>
<dbReference type="UniPathway" id="UPA00878"/>
<dbReference type="BioGRID-ORCS" id="16993">
    <property type="hits" value="4 hits in 80 CRISPR screens"/>
</dbReference>
<dbReference type="ChiTaRS" id="Lta4h">
    <property type="organism name" value="mouse"/>
</dbReference>
<dbReference type="PRO" id="PR:P24527"/>
<dbReference type="Proteomes" id="UP000000589">
    <property type="component" value="Chromosome 10"/>
</dbReference>
<dbReference type="RNAct" id="P24527">
    <property type="molecule type" value="protein"/>
</dbReference>
<dbReference type="Bgee" id="ENSMUSG00000015889">
    <property type="expression patterns" value="Expressed in granulocyte and 269 other cell types or tissues"/>
</dbReference>
<dbReference type="GO" id="GO:0005829">
    <property type="term" value="C:cytosol"/>
    <property type="evidence" value="ECO:0007669"/>
    <property type="project" value="Ensembl"/>
</dbReference>
<dbReference type="GO" id="GO:0005654">
    <property type="term" value="C:nucleoplasm"/>
    <property type="evidence" value="ECO:0007669"/>
    <property type="project" value="Ensembl"/>
</dbReference>
<dbReference type="GO" id="GO:0004177">
    <property type="term" value="F:aminopeptidase activity"/>
    <property type="evidence" value="ECO:0000250"/>
    <property type="project" value="UniProtKB"/>
</dbReference>
<dbReference type="GO" id="GO:0004301">
    <property type="term" value="F:epoxide hydrolase activity"/>
    <property type="evidence" value="ECO:0000250"/>
    <property type="project" value="UniProtKB"/>
</dbReference>
<dbReference type="GO" id="GO:0004463">
    <property type="term" value="F:leukotriene-A4 hydrolase activity"/>
    <property type="evidence" value="ECO:0000250"/>
    <property type="project" value="UniProtKB"/>
</dbReference>
<dbReference type="GO" id="GO:0070006">
    <property type="term" value="F:metalloaminopeptidase activity"/>
    <property type="evidence" value="ECO:0007669"/>
    <property type="project" value="Ensembl"/>
</dbReference>
<dbReference type="GO" id="GO:0045148">
    <property type="term" value="F:tripeptide aminopeptidase activity"/>
    <property type="evidence" value="ECO:0007669"/>
    <property type="project" value="UniProtKB-EC"/>
</dbReference>
<dbReference type="GO" id="GO:0008270">
    <property type="term" value="F:zinc ion binding"/>
    <property type="evidence" value="ECO:0000250"/>
    <property type="project" value="UniProtKB"/>
</dbReference>
<dbReference type="GO" id="GO:0019370">
    <property type="term" value="P:leukotriene biosynthetic process"/>
    <property type="evidence" value="ECO:0000250"/>
    <property type="project" value="UniProtKB"/>
</dbReference>
<dbReference type="GO" id="GO:0043171">
    <property type="term" value="P:peptide catabolic process"/>
    <property type="evidence" value="ECO:0000250"/>
    <property type="project" value="UniProtKB"/>
</dbReference>
<dbReference type="GO" id="GO:0006508">
    <property type="term" value="P:proteolysis"/>
    <property type="evidence" value="ECO:0007669"/>
    <property type="project" value="UniProtKB-KW"/>
</dbReference>
<dbReference type="GO" id="GO:0043434">
    <property type="term" value="P:response to peptide hormone"/>
    <property type="evidence" value="ECO:0007669"/>
    <property type="project" value="Ensembl"/>
</dbReference>
<dbReference type="GO" id="GO:0010043">
    <property type="term" value="P:response to zinc ion"/>
    <property type="evidence" value="ECO:0007669"/>
    <property type="project" value="Ensembl"/>
</dbReference>
<dbReference type="GO" id="GO:0060509">
    <property type="term" value="P:type I pneumocyte differentiation"/>
    <property type="evidence" value="ECO:0007669"/>
    <property type="project" value="Ensembl"/>
</dbReference>
<dbReference type="CDD" id="cd09599">
    <property type="entry name" value="M1_LTA4H"/>
    <property type="match status" value="1"/>
</dbReference>
<dbReference type="FunFam" id="1.10.390.10:FF:000003">
    <property type="entry name" value="Leukotriene A(4) hydrolase"/>
    <property type="match status" value="1"/>
</dbReference>
<dbReference type="FunFam" id="1.25.40.320:FF:000002">
    <property type="entry name" value="Leukotriene A(4) hydrolase"/>
    <property type="match status" value="1"/>
</dbReference>
<dbReference type="FunFam" id="2.60.40.1730:FF:000004">
    <property type="entry name" value="Leukotriene A(4) hydrolase"/>
    <property type="match status" value="1"/>
</dbReference>
<dbReference type="FunFam" id="3.30.2010.30:FF:000001">
    <property type="entry name" value="Leukotriene A(4) hydrolase"/>
    <property type="match status" value="1"/>
</dbReference>
<dbReference type="Gene3D" id="3.30.2010.30">
    <property type="match status" value="1"/>
</dbReference>
<dbReference type="Gene3D" id="1.10.390.10">
    <property type="entry name" value="Neutral Protease Domain 2"/>
    <property type="match status" value="1"/>
</dbReference>
<dbReference type="Gene3D" id="1.25.40.320">
    <property type="entry name" value="Peptidase M1, leukotriene A4 hydrolase/aminopeptidase C-terminal domain"/>
    <property type="match status" value="1"/>
</dbReference>
<dbReference type="Gene3D" id="2.60.40.1730">
    <property type="entry name" value="tricorn interacting facor f3 domain"/>
    <property type="match status" value="1"/>
</dbReference>
<dbReference type="InterPro" id="IPR045357">
    <property type="entry name" value="Aminopeptidase_N-like_N"/>
</dbReference>
<dbReference type="InterPro" id="IPR042097">
    <property type="entry name" value="Aminopeptidase_N-like_N_sf"/>
</dbReference>
<dbReference type="InterPro" id="IPR016024">
    <property type="entry name" value="ARM-type_fold"/>
</dbReference>
<dbReference type="InterPro" id="IPR012777">
    <property type="entry name" value="LTA4H"/>
</dbReference>
<dbReference type="InterPro" id="IPR049980">
    <property type="entry name" value="LTA4H_cat"/>
</dbReference>
<dbReference type="InterPro" id="IPR038502">
    <property type="entry name" value="M1_LTA-4_hydro/amino_C_sf"/>
</dbReference>
<dbReference type="InterPro" id="IPR034015">
    <property type="entry name" value="M1_LTA4H"/>
</dbReference>
<dbReference type="InterPro" id="IPR001930">
    <property type="entry name" value="Peptidase_M1"/>
</dbReference>
<dbReference type="InterPro" id="IPR015211">
    <property type="entry name" value="Peptidase_M1_C"/>
</dbReference>
<dbReference type="InterPro" id="IPR014782">
    <property type="entry name" value="Peptidase_M1_dom"/>
</dbReference>
<dbReference type="InterPro" id="IPR027268">
    <property type="entry name" value="Peptidase_M4/M1_CTD_sf"/>
</dbReference>
<dbReference type="NCBIfam" id="TIGR02411">
    <property type="entry name" value="leuko_A4_hydro"/>
    <property type="match status" value="1"/>
</dbReference>
<dbReference type="PANTHER" id="PTHR45726">
    <property type="entry name" value="LEUKOTRIENE A-4 HYDROLASE"/>
    <property type="match status" value="1"/>
</dbReference>
<dbReference type="PANTHER" id="PTHR45726:SF3">
    <property type="entry name" value="LEUKOTRIENE A-4 HYDROLASE"/>
    <property type="match status" value="1"/>
</dbReference>
<dbReference type="Pfam" id="PF09127">
    <property type="entry name" value="Leuk-A4-hydro_C"/>
    <property type="match status" value="1"/>
</dbReference>
<dbReference type="Pfam" id="PF01433">
    <property type="entry name" value="Peptidase_M1"/>
    <property type="match status" value="1"/>
</dbReference>
<dbReference type="Pfam" id="PF17900">
    <property type="entry name" value="Peptidase_M1_N"/>
    <property type="match status" value="1"/>
</dbReference>
<dbReference type="PRINTS" id="PR00756">
    <property type="entry name" value="ALADIPTASE"/>
</dbReference>
<dbReference type="SMART" id="SM01263">
    <property type="entry name" value="Leuk-A4-hydro_C"/>
    <property type="match status" value="1"/>
</dbReference>
<dbReference type="SUPFAM" id="SSF48371">
    <property type="entry name" value="ARM repeat"/>
    <property type="match status" value="1"/>
</dbReference>
<dbReference type="SUPFAM" id="SSF63737">
    <property type="entry name" value="Leukotriene A4 hydrolase N-terminal domain"/>
    <property type="match status" value="1"/>
</dbReference>
<dbReference type="SUPFAM" id="SSF55486">
    <property type="entry name" value="Metalloproteases ('zincins'), catalytic domain"/>
    <property type="match status" value="1"/>
</dbReference>
<dbReference type="PROSITE" id="PS00142">
    <property type="entry name" value="ZINC_PROTEASE"/>
    <property type="match status" value="1"/>
</dbReference>
<keyword id="KW-0007">Acetylation</keyword>
<keyword id="KW-0963">Cytoplasm</keyword>
<keyword id="KW-0378">Hydrolase</keyword>
<keyword id="KW-0434">Leukotriene biosynthesis</keyword>
<keyword id="KW-0479">Metal-binding</keyword>
<keyword id="KW-0482">Metalloprotease</keyword>
<keyword id="KW-0597">Phosphoprotein</keyword>
<keyword id="KW-0645">Protease</keyword>
<keyword id="KW-1185">Reference proteome</keyword>
<keyword id="KW-0862">Zinc</keyword>
<feature type="chain" id="PRO_0000095125" description="Leukotriene A-4 hydrolase">
    <location>
        <begin position="1"/>
        <end position="611"/>
    </location>
</feature>
<feature type="active site" description="Proton acceptor" evidence="1">
    <location>
        <position position="297"/>
    </location>
</feature>
<feature type="active site" description="Proton donor" evidence="1">
    <location>
        <position position="384"/>
    </location>
</feature>
<feature type="binding site" evidence="1">
    <location>
        <begin position="135"/>
        <end position="137"/>
    </location>
    <ligand>
        <name>a peptide</name>
        <dbReference type="ChEBI" id="CHEBI:60466"/>
    </ligand>
</feature>
<feature type="binding site" evidence="1">
    <location>
        <begin position="267"/>
        <end position="272"/>
    </location>
    <ligand>
        <name>a peptide</name>
        <dbReference type="ChEBI" id="CHEBI:60466"/>
    </ligand>
</feature>
<feature type="binding site" evidence="1">
    <location>
        <position position="296"/>
    </location>
    <ligand>
        <name>Zn(2+)</name>
        <dbReference type="ChEBI" id="CHEBI:29105"/>
        <note>catalytic</note>
    </ligand>
</feature>
<feature type="binding site" evidence="1">
    <location>
        <position position="300"/>
    </location>
    <ligand>
        <name>Zn(2+)</name>
        <dbReference type="ChEBI" id="CHEBI:29105"/>
        <note>catalytic</note>
    </ligand>
</feature>
<feature type="binding site" evidence="1">
    <location>
        <position position="319"/>
    </location>
    <ligand>
        <name>Zn(2+)</name>
        <dbReference type="ChEBI" id="CHEBI:29105"/>
        <note>catalytic</note>
    </ligand>
</feature>
<feature type="binding site" evidence="1">
    <location>
        <begin position="564"/>
        <end position="566"/>
    </location>
    <ligand>
        <name>a peptide</name>
        <dbReference type="ChEBI" id="CHEBI:60466"/>
    </ligand>
</feature>
<feature type="site" description="Essential for epoxide hydrolase activity, but not for aminopeptidase activity" evidence="1">
    <location>
        <position position="376"/>
    </location>
</feature>
<feature type="site" description="Covalently modified during suicide inhibition by leukotrienes" evidence="1">
    <location>
        <position position="379"/>
    </location>
</feature>
<feature type="modified residue" description="N6-acetyllysine" evidence="1">
    <location>
        <position position="73"/>
    </location>
</feature>
<feature type="modified residue" description="N6-acetyllysine" evidence="1">
    <location>
        <position position="337"/>
    </location>
</feature>
<feature type="modified residue" description="N6-acetyllysine" evidence="1">
    <location>
        <position position="414"/>
    </location>
</feature>
<feature type="modified residue" description="Phosphoserine" evidence="1">
    <location>
        <position position="416"/>
    </location>
</feature>
<feature type="modified residue" description="N6-acetyllysine" evidence="1">
    <location>
        <position position="573"/>
    </location>
</feature>
<feature type="mutagenesis site" description="Complete loss of LTA4 hydrolase and peptidase enzyme activities." evidence="3">
    <original>H</original>
    <variation>Y</variation>
    <location>
        <position position="296"/>
    </location>
</feature>
<feature type="mutagenesis site" description="Complete loss of LTA4 hydrolase and peptidase enzyme activities." evidence="3">
    <original>H</original>
    <variation>Y</variation>
    <location>
        <position position="300"/>
    </location>
</feature>
<feature type="mutagenesis site" description="Complete loss of LTA4 hydrolase and peptidase enzyme activities." evidence="3">
    <original>E</original>
    <variation>Q</variation>
    <location>
        <position position="319"/>
    </location>
</feature>
<feature type="mutagenesis site" description="Alters leukotriene hydrolase activity, strongly enhancing the formation of a metabolite that is normally produced in trace amounts." evidence="5">
    <original>Y</original>
    <variation>F</variation>
    <variation>H</variation>
    <variation>Q</variation>
    <location>
        <position position="384"/>
    </location>
</feature>
<feature type="sequence conflict" description="In Ref. 1; AAB59675 and 3; AAH21417." evidence="6" ref="1 3">
    <original>T</original>
    <variation>A</variation>
    <location>
        <position position="447"/>
    </location>
</feature>
<organism>
    <name type="scientific">Mus musculus</name>
    <name type="common">Mouse</name>
    <dbReference type="NCBI Taxonomy" id="10090"/>
    <lineage>
        <taxon>Eukaryota</taxon>
        <taxon>Metazoa</taxon>
        <taxon>Chordata</taxon>
        <taxon>Craniata</taxon>
        <taxon>Vertebrata</taxon>
        <taxon>Euteleostomi</taxon>
        <taxon>Mammalia</taxon>
        <taxon>Eutheria</taxon>
        <taxon>Euarchontoglires</taxon>
        <taxon>Glires</taxon>
        <taxon>Rodentia</taxon>
        <taxon>Myomorpha</taxon>
        <taxon>Muroidea</taxon>
        <taxon>Muridae</taxon>
        <taxon>Murinae</taxon>
        <taxon>Mus</taxon>
        <taxon>Mus</taxon>
    </lineage>
</organism>
<reference key="1">
    <citation type="journal article" date="1991" name="Biochem. Biophys. Res. Commun.">
        <title>Molecular cloning and expression of mouse leukotriene A4 hydrolase cDNA.</title>
        <authorList>
            <person name="Medina J.F."/>
            <person name="Raadmark O."/>
            <person name="Funk C.D."/>
            <person name="Haeggstroem J.Z."/>
        </authorList>
    </citation>
    <scope>NUCLEOTIDE SEQUENCE [MRNA]</scope>
    <source>
        <tissue>Spleen</tissue>
    </source>
</reference>
<reference key="2">
    <citation type="journal article" date="2005" name="Science">
        <title>The transcriptional landscape of the mammalian genome.</title>
        <authorList>
            <person name="Carninci P."/>
            <person name="Kasukawa T."/>
            <person name="Katayama S."/>
            <person name="Gough J."/>
            <person name="Frith M.C."/>
            <person name="Maeda N."/>
            <person name="Oyama R."/>
            <person name="Ravasi T."/>
            <person name="Lenhard B."/>
            <person name="Wells C."/>
            <person name="Kodzius R."/>
            <person name="Shimokawa K."/>
            <person name="Bajic V.B."/>
            <person name="Brenner S.E."/>
            <person name="Batalov S."/>
            <person name="Forrest A.R."/>
            <person name="Zavolan M."/>
            <person name="Davis M.J."/>
            <person name="Wilming L.G."/>
            <person name="Aidinis V."/>
            <person name="Allen J.E."/>
            <person name="Ambesi-Impiombato A."/>
            <person name="Apweiler R."/>
            <person name="Aturaliya R.N."/>
            <person name="Bailey T.L."/>
            <person name="Bansal M."/>
            <person name="Baxter L."/>
            <person name="Beisel K.W."/>
            <person name="Bersano T."/>
            <person name="Bono H."/>
            <person name="Chalk A.M."/>
            <person name="Chiu K.P."/>
            <person name="Choudhary V."/>
            <person name="Christoffels A."/>
            <person name="Clutterbuck D.R."/>
            <person name="Crowe M.L."/>
            <person name="Dalla E."/>
            <person name="Dalrymple B.P."/>
            <person name="de Bono B."/>
            <person name="Della Gatta G."/>
            <person name="di Bernardo D."/>
            <person name="Down T."/>
            <person name="Engstrom P."/>
            <person name="Fagiolini M."/>
            <person name="Faulkner G."/>
            <person name="Fletcher C.F."/>
            <person name="Fukushima T."/>
            <person name="Furuno M."/>
            <person name="Futaki S."/>
            <person name="Gariboldi M."/>
            <person name="Georgii-Hemming P."/>
            <person name="Gingeras T.R."/>
            <person name="Gojobori T."/>
            <person name="Green R.E."/>
            <person name="Gustincich S."/>
            <person name="Harbers M."/>
            <person name="Hayashi Y."/>
            <person name="Hensch T.K."/>
            <person name="Hirokawa N."/>
            <person name="Hill D."/>
            <person name="Huminiecki L."/>
            <person name="Iacono M."/>
            <person name="Ikeo K."/>
            <person name="Iwama A."/>
            <person name="Ishikawa T."/>
            <person name="Jakt M."/>
            <person name="Kanapin A."/>
            <person name="Katoh M."/>
            <person name="Kawasawa Y."/>
            <person name="Kelso J."/>
            <person name="Kitamura H."/>
            <person name="Kitano H."/>
            <person name="Kollias G."/>
            <person name="Krishnan S.P."/>
            <person name="Kruger A."/>
            <person name="Kummerfeld S.K."/>
            <person name="Kurochkin I.V."/>
            <person name="Lareau L.F."/>
            <person name="Lazarevic D."/>
            <person name="Lipovich L."/>
            <person name="Liu J."/>
            <person name="Liuni S."/>
            <person name="McWilliam S."/>
            <person name="Madan Babu M."/>
            <person name="Madera M."/>
            <person name="Marchionni L."/>
            <person name="Matsuda H."/>
            <person name="Matsuzawa S."/>
            <person name="Miki H."/>
            <person name="Mignone F."/>
            <person name="Miyake S."/>
            <person name="Morris K."/>
            <person name="Mottagui-Tabar S."/>
            <person name="Mulder N."/>
            <person name="Nakano N."/>
            <person name="Nakauchi H."/>
            <person name="Ng P."/>
            <person name="Nilsson R."/>
            <person name="Nishiguchi S."/>
            <person name="Nishikawa S."/>
            <person name="Nori F."/>
            <person name="Ohara O."/>
            <person name="Okazaki Y."/>
            <person name="Orlando V."/>
            <person name="Pang K.C."/>
            <person name="Pavan W.J."/>
            <person name="Pavesi G."/>
            <person name="Pesole G."/>
            <person name="Petrovsky N."/>
            <person name="Piazza S."/>
            <person name="Reed J."/>
            <person name="Reid J.F."/>
            <person name="Ring B.Z."/>
            <person name="Ringwald M."/>
            <person name="Rost B."/>
            <person name="Ruan Y."/>
            <person name="Salzberg S.L."/>
            <person name="Sandelin A."/>
            <person name="Schneider C."/>
            <person name="Schoenbach C."/>
            <person name="Sekiguchi K."/>
            <person name="Semple C.A."/>
            <person name="Seno S."/>
            <person name="Sessa L."/>
            <person name="Sheng Y."/>
            <person name="Shibata Y."/>
            <person name="Shimada H."/>
            <person name="Shimada K."/>
            <person name="Silva D."/>
            <person name="Sinclair B."/>
            <person name="Sperling S."/>
            <person name="Stupka E."/>
            <person name="Sugiura K."/>
            <person name="Sultana R."/>
            <person name="Takenaka Y."/>
            <person name="Taki K."/>
            <person name="Tammoja K."/>
            <person name="Tan S.L."/>
            <person name="Tang S."/>
            <person name="Taylor M.S."/>
            <person name="Tegner J."/>
            <person name="Teichmann S.A."/>
            <person name="Ueda H.R."/>
            <person name="van Nimwegen E."/>
            <person name="Verardo R."/>
            <person name="Wei C.L."/>
            <person name="Yagi K."/>
            <person name="Yamanishi H."/>
            <person name="Zabarovsky E."/>
            <person name="Zhu S."/>
            <person name="Zimmer A."/>
            <person name="Hide W."/>
            <person name="Bult C."/>
            <person name="Grimmond S.M."/>
            <person name="Teasdale R.D."/>
            <person name="Liu E.T."/>
            <person name="Brusic V."/>
            <person name="Quackenbush J."/>
            <person name="Wahlestedt C."/>
            <person name="Mattick J.S."/>
            <person name="Hume D.A."/>
            <person name="Kai C."/>
            <person name="Sasaki D."/>
            <person name="Tomaru Y."/>
            <person name="Fukuda S."/>
            <person name="Kanamori-Katayama M."/>
            <person name="Suzuki M."/>
            <person name="Aoki J."/>
            <person name="Arakawa T."/>
            <person name="Iida J."/>
            <person name="Imamura K."/>
            <person name="Itoh M."/>
            <person name="Kato T."/>
            <person name="Kawaji H."/>
            <person name="Kawagashira N."/>
            <person name="Kawashima T."/>
            <person name="Kojima M."/>
            <person name="Kondo S."/>
            <person name="Konno H."/>
            <person name="Nakano K."/>
            <person name="Ninomiya N."/>
            <person name="Nishio T."/>
            <person name="Okada M."/>
            <person name="Plessy C."/>
            <person name="Shibata K."/>
            <person name="Shiraki T."/>
            <person name="Suzuki S."/>
            <person name="Tagami M."/>
            <person name="Waki K."/>
            <person name="Watahiki A."/>
            <person name="Okamura-Oho Y."/>
            <person name="Suzuki H."/>
            <person name="Kawai J."/>
            <person name="Hayashizaki Y."/>
        </authorList>
    </citation>
    <scope>NUCLEOTIDE SEQUENCE [LARGE SCALE MRNA]</scope>
    <source>
        <strain>C57BL/6J</strain>
        <tissue>Olfactory bulb</tissue>
    </source>
</reference>
<reference key="3">
    <citation type="journal article" date="2004" name="Genome Res.">
        <title>The status, quality, and expansion of the NIH full-length cDNA project: the Mammalian Gene Collection (MGC).</title>
        <authorList>
            <consortium name="The MGC Project Team"/>
        </authorList>
    </citation>
    <scope>NUCLEOTIDE SEQUENCE [LARGE SCALE MRNA]</scope>
</reference>
<reference key="4">
    <citation type="journal article" date="1991" name="Proc. Natl. Acad. Sci. U.S.A.">
        <title>Leukotriene A4 hydrolase: determination of the three zinc-binding ligands by site-directed mutagenesis and zinc analysis.</title>
        <authorList>
            <person name="Medina J.F."/>
            <person name="Wetterholm A."/>
            <person name="Raadmark O."/>
            <person name="Shapiro R."/>
            <person name="Haeggstroem J.Z."/>
            <person name="Vallee B.L."/>
            <person name="Samuelsson B."/>
        </authorList>
    </citation>
    <scope>CATALYTIC ACTIVITY</scope>
    <scope>MUTAGENESIS OF HIS-296; HIS-300 AND GLU-319</scope>
    <scope>FUNCTION</scope>
</reference>
<reference key="5">
    <citation type="journal article" date="1997" name="J. Biol. Chem.">
        <title>Mutation of tyrosine 383 in leukotriene A4 hydrolase allows conversion of leukotriene A4 into 5S,6S-dihydroxy-7,9-trans-11,14-cis-eicosatetraenoic acid. Implications for the epoxide hydrolase mechanism.</title>
        <authorList>
            <person name="Andberg M.B."/>
            <person name="Hamberg M."/>
            <person name="Haeggstrom J.Z."/>
        </authorList>
    </citation>
    <scope>MUTAGENESIS OF TYR-384</scope>
    <scope>CATALYTIC ACTIVITY</scope>
    <scope>FUNCTION</scope>
    <scope>BIOPHYSICOCHEMICAL PROPERTIES</scope>
    <scope>ACTIVITY REGULATION</scope>
</reference>
<reference key="6">
    <citation type="journal article" date="1999" name="J. Immunol.">
        <title>Determination of the contribution of cysteinyl leukotrienes and leukotriene B4 in acute inflammatory responses using 5-lipoxygenase- and leukotriene A4 hydrolase-deficient mice.</title>
        <authorList>
            <person name="Byrum R.S."/>
            <person name="Goulet J.L."/>
            <person name="Snouwaert J.N."/>
            <person name="Griffiths R.J."/>
            <person name="Koller B.H."/>
        </authorList>
    </citation>
    <scope>DISRUPTION PHENOTYPE</scope>
</reference>
<reference key="7">
    <citation type="journal article" date="2010" name="Cell">
        <title>A tissue-specific atlas of mouse protein phosphorylation and expression.</title>
        <authorList>
            <person name="Huttlin E.L."/>
            <person name="Jedrychowski M.P."/>
            <person name="Elias J.E."/>
            <person name="Goswami T."/>
            <person name="Rad R."/>
            <person name="Beausoleil S.A."/>
            <person name="Villen J."/>
            <person name="Haas W."/>
            <person name="Sowa M.E."/>
            <person name="Gygi S.P."/>
        </authorList>
    </citation>
    <scope>IDENTIFICATION BY MASS SPECTROMETRY [LARGE SCALE ANALYSIS]</scope>
    <source>
        <tissue>Brain</tissue>
        <tissue>Brown adipose tissue</tissue>
        <tissue>Heart</tissue>
        <tissue>Kidney</tissue>
        <tissue>Liver</tissue>
        <tissue>Lung</tissue>
        <tissue>Pancreas</tissue>
        <tissue>Spleen</tissue>
        <tissue>Testis</tissue>
    </source>
</reference>
<reference key="8">
    <citation type="journal article" date="2010" name="Science">
        <title>A critical role for LTA4H in limiting chronic pulmonary neutrophilic inflammation.</title>
        <authorList>
            <person name="Snelgrove R.J."/>
            <person name="Jackson P.L."/>
            <person name="Hardison M.T."/>
            <person name="Noerager B.D."/>
            <person name="Kinloch A."/>
            <person name="Gaggar A."/>
            <person name="Shastry S."/>
            <person name="Rowe S.M."/>
            <person name="Shim Y.M."/>
            <person name="Hussell T."/>
            <person name="Blalock J.E."/>
        </authorList>
    </citation>
    <scope>CATALYTIC ACTIVITY</scope>
    <scope>FUNCTION</scope>
    <scope>DISRUPTION PHENOTYPE</scope>
    <scope>BIOPHYSICOCHEMICAL PROPERTIES</scope>
</reference>
<accession>P24527</accession>
<accession>Q3UY71</accession>
<accession>Q8VDR8</accession>
<comment type="function">
    <text evidence="1 3 4 5">Bifunctional zinc metalloenzyme that comprises both epoxide hydrolase (EH) and aminopeptidase activities (By similarity). Acts as an epoxide hydrolase to catalyze the conversion of LTA4 to the pro-inflammatory mediator leukotriene B4 (LTB4) (PubMed:1881903, PubMed:9287304). Also has aminopeptidase activity, with high affinity for N-terminal arginines of various synthetic tripeptides (By similarity). In addition to its pro-inflammatory EH activity, may also counteract inflammation by its aminopeptidase activity, which inactivates by cleavage another neutrophil attractant, the tripeptide Pro-Gly-Pro (PGP), a bioactive fragment of collagen generated by the action of matrix metalloproteinase-9 (MMP9) and prolylendopeptidase (PREPL) (PubMed:20813919). Involved also in the biosynthesis of resolvin E1 and 18S-resolvin E1 from eicosapentaenoic acid, two lipid mediators that show potent anti-inflammatory and pro-resolving actions (By similarity).</text>
</comment>
<comment type="catalytic activity">
    <reaction evidence="3 5">
        <text>leukotriene A4 + H2O = leukotriene B4</text>
        <dbReference type="Rhea" id="RHEA:22324"/>
        <dbReference type="ChEBI" id="CHEBI:15377"/>
        <dbReference type="ChEBI" id="CHEBI:57461"/>
        <dbReference type="ChEBI" id="CHEBI:57463"/>
        <dbReference type="EC" id="3.3.2.6"/>
    </reaction>
    <physiologicalReaction direction="left-to-right" evidence="3 5">
        <dbReference type="Rhea" id="RHEA:22325"/>
    </physiologicalReaction>
</comment>
<comment type="catalytic activity">
    <reaction evidence="1">
        <text>(5S,6S)-epoxy-(18R)-hydroxy-(7E,9E,11Z,14Z,16E)-eicosapentaenoate + H2O = resolvin E1</text>
        <dbReference type="Rhea" id="RHEA:50272"/>
        <dbReference type="ChEBI" id="CHEBI:15377"/>
        <dbReference type="ChEBI" id="CHEBI:91000"/>
        <dbReference type="ChEBI" id="CHEBI:132219"/>
    </reaction>
    <physiologicalReaction direction="left-to-right" evidence="1">
        <dbReference type="Rhea" id="RHEA:50273"/>
    </physiologicalReaction>
</comment>
<comment type="catalytic activity">
    <reaction evidence="1">
        <text>(5S,6S)-epoxy-(18S)-hydroxy-(7E,9E,11Z,14Z,16E)-eicosapentaenoate + H2O = 18S-resolvin E1</text>
        <dbReference type="Rhea" id="RHEA:51988"/>
        <dbReference type="ChEBI" id="CHEBI:15377"/>
        <dbReference type="ChEBI" id="CHEBI:134661"/>
        <dbReference type="ChEBI" id="CHEBI:136057"/>
    </reaction>
    <physiologicalReaction direction="left-to-right" evidence="1">
        <dbReference type="Rhea" id="RHEA:51989"/>
    </physiologicalReaction>
</comment>
<comment type="catalytic activity">
    <reaction evidence="3 4">
        <text>Release of the N-terminal residue from a tripeptide.</text>
        <dbReference type="EC" id="3.4.11.4"/>
    </reaction>
</comment>
<comment type="cofactor">
    <cofactor evidence="1">
        <name>Zn(2+)</name>
        <dbReference type="ChEBI" id="CHEBI:29105"/>
    </cofactor>
    <text evidence="1">Binds 1 zinc ion per subunit.</text>
</comment>
<comment type="activity regulation">
    <text evidence="1 5">Inhibited by bestatin (By similarity). The epoxide hydrolase activity is restrained by suicide inactivation that involves binding of LTA4 to Tyr-379 (PubMed:9287304). 4-(4-benzylphenyl)thiazol-2-amine (ARM1) selectively inhibits the epoxide hydrolase activity (By similarity).</text>
</comment>
<comment type="biophysicochemical properties">
    <kinetics>
        <KM evidence="5">5 uM for leukotriene A4</KM>
        <KM evidence="4">1.59 uM for Pro-Gly-Pro</KM>
        <Vmax evidence="5">1030.0 nmol/min/mg enzyme for leukotriene A4</Vmax>
    </kinetics>
</comment>
<comment type="pathway">
    <text evidence="3 5">Lipid metabolism; leukotriene B4 biosynthesis.</text>
</comment>
<comment type="subunit">
    <text evidence="1">Monomer.</text>
</comment>
<comment type="subcellular location">
    <subcellularLocation>
        <location evidence="1">Cytoplasm</location>
    </subcellularLocation>
</comment>
<comment type="PTM">
    <text evidence="1">Phosphorylation at Ser-416 inhibits leukotriene-A4 hydrolase activity.</text>
</comment>
<comment type="disruption phenotype">
    <text evidence="2 4">Deficient mice have normal phenotypes. Inflammatory reactions are reduced as are some other immunological responses.</text>
</comment>
<comment type="similarity">
    <text evidence="6">Belongs to the peptidase M1 family.</text>
</comment>